<gene>
    <name type="primary">FBXO15</name>
    <name type="synonym">FBX15</name>
</gene>
<sequence length="510" mass="57258">MATGRGRILQQHWLGLQTLRGPSRGGGAARGRARAFGCRKGPGVKLSAGSAALRCHAGGGQHWESSFSCCSGFLDGMPSEILLKIFSYLDAVSLLCTGCVSRRFYHLANDNFIWIGIYSTAFSPARSNWKFNSVEKIAMSMSFLSVQDKEAGYWKKEYITKQIASVKAALADILKPVNPYTGLPVKTKEALRIFGLGWAIILKEKGGKEYIMEHVDLSINDTSVTVIWYGKKWPCLASLSTLDLCGMTPVFTDWYKTPTKHRLRWHSLIAKYNLSHLTISTMIGCDRLIRIFCLHPGLLVGVWKKEEELAFVMANLHFHHLVERSTLGSATIPYELPPHSPFLDDSPEYGLHGYQLHVDLHSGGVFYLCGTFRNLFTKRGNIENGHVKLIVIHLKNNREHLPLIGKVGLSWKTDIFDGCIKSCSMMDVTLLDEHGKPFWCFSSPVCLRSPATPSDSSSFLGQTYNVDYVDAEGRVHVELVWIRETEEYLIVNLVLYLSIAKINHWFGTEY</sequence>
<organism>
    <name type="scientific">Homo sapiens</name>
    <name type="common">Human</name>
    <dbReference type="NCBI Taxonomy" id="9606"/>
    <lineage>
        <taxon>Eukaryota</taxon>
        <taxon>Metazoa</taxon>
        <taxon>Chordata</taxon>
        <taxon>Craniata</taxon>
        <taxon>Vertebrata</taxon>
        <taxon>Euteleostomi</taxon>
        <taxon>Mammalia</taxon>
        <taxon>Eutheria</taxon>
        <taxon>Euarchontoglires</taxon>
        <taxon>Primates</taxon>
        <taxon>Haplorrhini</taxon>
        <taxon>Catarrhini</taxon>
        <taxon>Hominidae</taxon>
        <taxon>Homo</taxon>
    </lineage>
</organism>
<keyword id="KW-0025">Alternative splicing</keyword>
<keyword id="KW-1267">Proteomics identification</keyword>
<keyword id="KW-1185">Reference proteome</keyword>
<keyword id="KW-0833">Ubl conjugation pathway</keyword>
<reference key="1">
    <citation type="journal article" date="2004" name="Nat. Genet.">
        <title>Complete sequencing and characterization of 21,243 full-length human cDNAs.</title>
        <authorList>
            <person name="Ota T."/>
            <person name="Suzuki Y."/>
            <person name="Nishikawa T."/>
            <person name="Otsuki T."/>
            <person name="Sugiyama T."/>
            <person name="Irie R."/>
            <person name="Wakamatsu A."/>
            <person name="Hayashi K."/>
            <person name="Sato H."/>
            <person name="Nagai K."/>
            <person name="Kimura K."/>
            <person name="Makita H."/>
            <person name="Sekine M."/>
            <person name="Obayashi M."/>
            <person name="Nishi T."/>
            <person name="Shibahara T."/>
            <person name="Tanaka T."/>
            <person name="Ishii S."/>
            <person name="Yamamoto J."/>
            <person name="Saito K."/>
            <person name="Kawai Y."/>
            <person name="Isono Y."/>
            <person name="Nakamura Y."/>
            <person name="Nagahari K."/>
            <person name="Murakami K."/>
            <person name="Yasuda T."/>
            <person name="Iwayanagi T."/>
            <person name="Wagatsuma M."/>
            <person name="Shiratori A."/>
            <person name="Sudo H."/>
            <person name="Hosoiri T."/>
            <person name="Kaku Y."/>
            <person name="Kodaira H."/>
            <person name="Kondo H."/>
            <person name="Sugawara M."/>
            <person name="Takahashi M."/>
            <person name="Kanda K."/>
            <person name="Yokoi T."/>
            <person name="Furuya T."/>
            <person name="Kikkawa E."/>
            <person name="Omura Y."/>
            <person name="Abe K."/>
            <person name="Kamihara K."/>
            <person name="Katsuta N."/>
            <person name="Sato K."/>
            <person name="Tanikawa M."/>
            <person name="Yamazaki M."/>
            <person name="Ninomiya K."/>
            <person name="Ishibashi T."/>
            <person name="Yamashita H."/>
            <person name="Murakawa K."/>
            <person name="Fujimori K."/>
            <person name="Tanai H."/>
            <person name="Kimata M."/>
            <person name="Watanabe M."/>
            <person name="Hiraoka S."/>
            <person name="Chiba Y."/>
            <person name="Ishida S."/>
            <person name="Ono Y."/>
            <person name="Takiguchi S."/>
            <person name="Watanabe S."/>
            <person name="Yosida M."/>
            <person name="Hotuta T."/>
            <person name="Kusano J."/>
            <person name="Kanehori K."/>
            <person name="Takahashi-Fujii A."/>
            <person name="Hara H."/>
            <person name="Tanase T.-O."/>
            <person name="Nomura Y."/>
            <person name="Togiya S."/>
            <person name="Komai F."/>
            <person name="Hara R."/>
            <person name="Takeuchi K."/>
            <person name="Arita M."/>
            <person name="Imose N."/>
            <person name="Musashino K."/>
            <person name="Yuuki H."/>
            <person name="Oshima A."/>
            <person name="Sasaki N."/>
            <person name="Aotsuka S."/>
            <person name="Yoshikawa Y."/>
            <person name="Matsunawa H."/>
            <person name="Ichihara T."/>
            <person name="Shiohata N."/>
            <person name="Sano S."/>
            <person name="Moriya S."/>
            <person name="Momiyama H."/>
            <person name="Satoh N."/>
            <person name="Takami S."/>
            <person name="Terashima Y."/>
            <person name="Suzuki O."/>
            <person name="Nakagawa S."/>
            <person name="Senoh A."/>
            <person name="Mizoguchi H."/>
            <person name="Goto Y."/>
            <person name="Shimizu F."/>
            <person name="Wakebe H."/>
            <person name="Hishigaki H."/>
            <person name="Watanabe T."/>
            <person name="Sugiyama A."/>
            <person name="Takemoto M."/>
            <person name="Kawakami B."/>
            <person name="Yamazaki M."/>
            <person name="Watanabe K."/>
            <person name="Kumagai A."/>
            <person name="Itakura S."/>
            <person name="Fukuzumi Y."/>
            <person name="Fujimori Y."/>
            <person name="Komiyama M."/>
            <person name="Tashiro H."/>
            <person name="Tanigami A."/>
            <person name="Fujiwara T."/>
            <person name="Ono T."/>
            <person name="Yamada K."/>
            <person name="Fujii Y."/>
            <person name="Ozaki K."/>
            <person name="Hirao M."/>
            <person name="Ohmori Y."/>
            <person name="Kawabata A."/>
            <person name="Hikiji T."/>
            <person name="Kobatake N."/>
            <person name="Inagaki H."/>
            <person name="Ikema Y."/>
            <person name="Okamoto S."/>
            <person name="Okitani R."/>
            <person name="Kawakami T."/>
            <person name="Noguchi S."/>
            <person name="Itoh T."/>
            <person name="Shigeta K."/>
            <person name="Senba T."/>
            <person name="Matsumura K."/>
            <person name="Nakajima Y."/>
            <person name="Mizuno T."/>
            <person name="Morinaga M."/>
            <person name="Sasaki M."/>
            <person name="Togashi T."/>
            <person name="Oyama M."/>
            <person name="Hata H."/>
            <person name="Watanabe M."/>
            <person name="Komatsu T."/>
            <person name="Mizushima-Sugano J."/>
            <person name="Satoh T."/>
            <person name="Shirai Y."/>
            <person name="Takahashi Y."/>
            <person name="Nakagawa K."/>
            <person name="Okumura K."/>
            <person name="Nagase T."/>
            <person name="Nomura N."/>
            <person name="Kikuchi H."/>
            <person name="Masuho Y."/>
            <person name="Yamashita R."/>
            <person name="Nakai K."/>
            <person name="Yada T."/>
            <person name="Nakamura Y."/>
            <person name="Ohara O."/>
            <person name="Isogai T."/>
            <person name="Sugano S."/>
        </authorList>
    </citation>
    <scope>NUCLEOTIDE SEQUENCE [LARGE SCALE MRNA] (ISOFORM 1)</scope>
    <source>
        <tissue>Cerebellum</tissue>
    </source>
</reference>
<reference key="2">
    <citation type="submission" date="2005-07" db="EMBL/GenBank/DDBJ databases">
        <authorList>
            <person name="Mural R.J."/>
            <person name="Istrail S."/>
            <person name="Sutton G."/>
            <person name="Florea L."/>
            <person name="Halpern A.L."/>
            <person name="Mobarry C.M."/>
            <person name="Lippert R."/>
            <person name="Walenz B."/>
            <person name="Shatkay H."/>
            <person name="Dew I."/>
            <person name="Miller J.R."/>
            <person name="Flanigan M.J."/>
            <person name="Edwards N.J."/>
            <person name="Bolanos R."/>
            <person name="Fasulo D."/>
            <person name="Halldorsson B.V."/>
            <person name="Hannenhalli S."/>
            <person name="Turner R."/>
            <person name="Yooseph S."/>
            <person name="Lu F."/>
            <person name="Nusskern D.R."/>
            <person name="Shue B.C."/>
            <person name="Zheng X.H."/>
            <person name="Zhong F."/>
            <person name="Delcher A.L."/>
            <person name="Huson D.H."/>
            <person name="Kravitz S.A."/>
            <person name="Mouchard L."/>
            <person name="Reinert K."/>
            <person name="Remington K.A."/>
            <person name="Clark A.G."/>
            <person name="Waterman M.S."/>
            <person name="Eichler E.E."/>
            <person name="Adams M.D."/>
            <person name="Hunkapiller M.W."/>
            <person name="Myers E.W."/>
            <person name="Venter J.C."/>
        </authorList>
    </citation>
    <scope>NUCLEOTIDE SEQUENCE [LARGE SCALE GENOMIC DNA]</scope>
</reference>
<reference key="3">
    <citation type="journal article" date="2004" name="Genome Res.">
        <title>The status, quality, and expansion of the NIH full-length cDNA project: the Mammalian Gene Collection (MGC).</title>
        <authorList>
            <consortium name="The MGC Project Team"/>
        </authorList>
    </citation>
    <scope>NUCLEOTIDE SEQUENCE [LARGE SCALE MRNA] (ISOFORM 2)</scope>
    <source>
        <tissue>Testis</tissue>
    </source>
</reference>
<name>FBX15_HUMAN</name>
<proteinExistence type="evidence at protein level"/>
<feature type="chain" id="PRO_0000119893" description="F-box only protein 15">
    <location>
        <begin position="1"/>
        <end position="510"/>
    </location>
</feature>
<feature type="domain" description="F-box" evidence="2">
    <location>
        <begin position="77"/>
        <end position="117"/>
    </location>
</feature>
<feature type="splice variant" id="VSP_043033" description="In isoform 2." evidence="3">
    <location>
        <begin position="1"/>
        <end position="76"/>
    </location>
</feature>
<feature type="sequence variant" id="VAR_049040" description="In dbSNP:rs35815390.">
    <original>Y</original>
    <variation>H</variation>
    <location>
        <position position="496"/>
    </location>
</feature>
<dbReference type="EMBL" id="AK094215">
    <property type="protein sequence ID" value="BAG52845.1"/>
    <property type="molecule type" value="mRNA"/>
</dbReference>
<dbReference type="EMBL" id="CH471117">
    <property type="protein sequence ID" value="EAW66537.1"/>
    <property type="molecule type" value="Genomic_DNA"/>
</dbReference>
<dbReference type="EMBL" id="BC029579">
    <property type="protein sequence ID" value="AAH29579.1"/>
    <property type="molecule type" value="mRNA"/>
</dbReference>
<dbReference type="CCDS" id="CCDS45884.1">
    <molecule id="Q8NCQ5-1"/>
</dbReference>
<dbReference type="RefSeq" id="NP_001136430.1">
    <molecule id="Q8NCQ5-1"/>
    <property type="nucleotide sequence ID" value="NM_001142958.2"/>
</dbReference>
<dbReference type="RefSeq" id="NP_689889.1">
    <molecule id="Q8NCQ5-2"/>
    <property type="nucleotide sequence ID" value="NM_152676.3"/>
</dbReference>
<dbReference type="RefSeq" id="XP_016881092.1">
    <property type="nucleotide sequence ID" value="XM_017025603.1"/>
</dbReference>
<dbReference type="RefSeq" id="XP_016881093.1">
    <molecule id="Q8NCQ5-2"/>
    <property type="nucleotide sequence ID" value="XM_017025604.3"/>
</dbReference>
<dbReference type="RefSeq" id="XP_047293297.1">
    <molecule id="Q8NCQ5-2"/>
    <property type="nucleotide sequence ID" value="XM_047437341.1"/>
</dbReference>
<dbReference type="RefSeq" id="XP_047293298.1">
    <molecule id="Q8NCQ5-2"/>
    <property type="nucleotide sequence ID" value="XM_047437342.1"/>
</dbReference>
<dbReference type="RefSeq" id="XP_054174242.1">
    <molecule id="Q8NCQ5-2"/>
    <property type="nucleotide sequence ID" value="XM_054318267.1"/>
</dbReference>
<dbReference type="RefSeq" id="XP_054174243.1">
    <molecule id="Q8NCQ5-2"/>
    <property type="nucleotide sequence ID" value="XM_054318268.1"/>
</dbReference>
<dbReference type="RefSeq" id="XP_054174244.1">
    <molecule id="Q8NCQ5-2"/>
    <property type="nucleotide sequence ID" value="XM_054318269.1"/>
</dbReference>
<dbReference type="BioGRID" id="128386">
    <property type="interactions" value="12"/>
</dbReference>
<dbReference type="ComplexPortal" id="CPX-7925">
    <property type="entry name" value="SCF E3 ubiquitin ligase complex, FBXO15 variant"/>
</dbReference>
<dbReference type="FunCoup" id="Q8NCQ5">
    <property type="interactions" value="91"/>
</dbReference>
<dbReference type="IntAct" id="Q8NCQ5">
    <property type="interactions" value="7"/>
</dbReference>
<dbReference type="STRING" id="9606.ENSP00000393154"/>
<dbReference type="GlyGen" id="Q8NCQ5">
    <property type="glycosylation" value="1 site"/>
</dbReference>
<dbReference type="iPTMnet" id="Q8NCQ5"/>
<dbReference type="PhosphoSitePlus" id="Q8NCQ5"/>
<dbReference type="BioMuta" id="FBXO15"/>
<dbReference type="DMDM" id="384872371"/>
<dbReference type="jPOST" id="Q8NCQ5"/>
<dbReference type="MassIVE" id="Q8NCQ5"/>
<dbReference type="PaxDb" id="9606-ENSP00000393154"/>
<dbReference type="PeptideAtlas" id="Q8NCQ5"/>
<dbReference type="ProteomicsDB" id="72921">
    <molecule id="Q8NCQ5-1"/>
</dbReference>
<dbReference type="ProteomicsDB" id="72922">
    <molecule id="Q8NCQ5-2"/>
</dbReference>
<dbReference type="Antibodypedia" id="42215">
    <property type="antibodies" value="192 antibodies from 25 providers"/>
</dbReference>
<dbReference type="DNASU" id="201456"/>
<dbReference type="Ensembl" id="ENST00000419743.7">
    <molecule id="Q8NCQ5-1"/>
    <property type="protein sequence ID" value="ENSP00000393154.2"/>
    <property type="gene ID" value="ENSG00000141665.13"/>
</dbReference>
<dbReference type="GeneID" id="201456"/>
<dbReference type="KEGG" id="hsa:201456"/>
<dbReference type="MANE-Select" id="ENST00000419743.7">
    <property type="protein sequence ID" value="ENSP00000393154.2"/>
    <property type="RefSeq nucleotide sequence ID" value="NM_001142958.2"/>
    <property type="RefSeq protein sequence ID" value="NP_001136430.1"/>
</dbReference>
<dbReference type="UCSC" id="uc002llf.3">
    <molecule id="Q8NCQ5-1"/>
    <property type="organism name" value="human"/>
</dbReference>
<dbReference type="AGR" id="HGNC:13617"/>
<dbReference type="CTD" id="201456"/>
<dbReference type="DisGeNET" id="201456"/>
<dbReference type="GeneCards" id="FBXO15"/>
<dbReference type="HGNC" id="HGNC:13617">
    <property type="gene designation" value="FBXO15"/>
</dbReference>
<dbReference type="HPA" id="ENSG00000141665">
    <property type="expression patterns" value="Tissue enhanced (fallopian tube, testis)"/>
</dbReference>
<dbReference type="MIM" id="609093">
    <property type="type" value="gene"/>
</dbReference>
<dbReference type="neXtProt" id="NX_Q8NCQ5"/>
<dbReference type="OpenTargets" id="ENSG00000141665"/>
<dbReference type="PharmGKB" id="PA134894755"/>
<dbReference type="VEuPathDB" id="HostDB:ENSG00000141665"/>
<dbReference type="eggNOG" id="ENOG502QPX2">
    <property type="taxonomic scope" value="Eukaryota"/>
</dbReference>
<dbReference type="GeneTree" id="ENSGT00390000017498"/>
<dbReference type="HOGENOM" id="CLU_047012_0_0_1"/>
<dbReference type="InParanoid" id="Q8NCQ5"/>
<dbReference type="OMA" id="YIMEHID"/>
<dbReference type="OrthoDB" id="3219396at2759"/>
<dbReference type="PAN-GO" id="Q8NCQ5">
    <property type="GO annotations" value="1 GO annotation based on evolutionary models"/>
</dbReference>
<dbReference type="PhylomeDB" id="Q8NCQ5"/>
<dbReference type="TreeFam" id="TF332483"/>
<dbReference type="PathwayCommons" id="Q8NCQ5"/>
<dbReference type="Reactome" id="R-HSA-8951664">
    <property type="pathway name" value="Neddylation"/>
</dbReference>
<dbReference type="Reactome" id="R-HSA-983168">
    <property type="pathway name" value="Antigen processing: Ubiquitination &amp; Proteasome degradation"/>
</dbReference>
<dbReference type="SignaLink" id="Q8NCQ5"/>
<dbReference type="SIGNOR" id="Q8NCQ5"/>
<dbReference type="BioGRID-ORCS" id="201456">
    <property type="hits" value="5 hits in 1184 CRISPR screens"/>
</dbReference>
<dbReference type="ChiTaRS" id="FBXO15">
    <property type="organism name" value="human"/>
</dbReference>
<dbReference type="GenomeRNAi" id="201456"/>
<dbReference type="Pharos" id="Q8NCQ5">
    <property type="development level" value="Tbio"/>
</dbReference>
<dbReference type="PRO" id="PR:Q8NCQ5"/>
<dbReference type="Proteomes" id="UP000005640">
    <property type="component" value="Chromosome 18"/>
</dbReference>
<dbReference type="RNAct" id="Q8NCQ5">
    <property type="molecule type" value="protein"/>
</dbReference>
<dbReference type="Bgee" id="ENSG00000141665">
    <property type="expression patterns" value="Expressed in bronchial epithelial cell and 144 other cell types or tissues"/>
</dbReference>
<dbReference type="ExpressionAtlas" id="Q8NCQ5">
    <property type="expression patterns" value="baseline and differential"/>
</dbReference>
<dbReference type="GO" id="GO:0005829">
    <property type="term" value="C:cytosol"/>
    <property type="evidence" value="ECO:0000304"/>
    <property type="project" value="Reactome"/>
</dbReference>
<dbReference type="GO" id="GO:0019005">
    <property type="term" value="C:SCF ubiquitin ligase complex"/>
    <property type="evidence" value="ECO:0000318"/>
    <property type="project" value="GO_Central"/>
</dbReference>
<dbReference type="CDD" id="cd22093">
    <property type="entry name" value="F-box_FBXO15"/>
    <property type="match status" value="1"/>
</dbReference>
<dbReference type="FunFam" id="1.20.1280.50:FF:000061">
    <property type="entry name" value="F-box only protein 15"/>
    <property type="match status" value="1"/>
</dbReference>
<dbReference type="Gene3D" id="1.20.1280.50">
    <property type="match status" value="1"/>
</dbReference>
<dbReference type="InterPro" id="IPR036047">
    <property type="entry name" value="F-box-like_dom_sf"/>
</dbReference>
<dbReference type="InterPro" id="IPR001810">
    <property type="entry name" value="F-box_dom"/>
</dbReference>
<dbReference type="PANTHER" id="PTHR46731">
    <property type="entry name" value="F-BOX ONLY PROTEIN 15"/>
    <property type="match status" value="1"/>
</dbReference>
<dbReference type="PANTHER" id="PTHR46731:SF1">
    <property type="entry name" value="F-BOX ONLY PROTEIN 15"/>
    <property type="match status" value="1"/>
</dbReference>
<dbReference type="Pfam" id="PF12937">
    <property type="entry name" value="F-box-like"/>
    <property type="match status" value="1"/>
</dbReference>
<dbReference type="SMART" id="SM00256">
    <property type="entry name" value="FBOX"/>
    <property type="match status" value="1"/>
</dbReference>
<dbReference type="SUPFAM" id="SSF81383">
    <property type="entry name" value="F-box domain"/>
    <property type="match status" value="1"/>
</dbReference>
<dbReference type="PROSITE" id="PS50181">
    <property type="entry name" value="FBOX"/>
    <property type="match status" value="1"/>
</dbReference>
<protein>
    <recommendedName>
        <fullName>F-box only protein 15</fullName>
    </recommendedName>
</protein>
<comment type="function">
    <text evidence="1">Substrate-recognition component of the SCF (SKP1-CUL1-F-box protein)-type E3 ubiquitin ligase complex.</text>
</comment>
<comment type="subunit">
    <text evidence="1">Directly interacts with SKP1 and CUL1.</text>
</comment>
<comment type="interaction">
    <interactant intactId="EBI-6660598">
        <id>Q8NCQ5</id>
    </interactant>
    <interactant intactId="EBI-1055254">
        <id>Q8WXH2</id>
        <label>JPH3</label>
    </interactant>
    <organismsDiffer>false</organismsDiffer>
    <experiments>3</experiments>
</comment>
<comment type="alternative products">
    <event type="alternative splicing"/>
    <isoform>
        <id>Q8NCQ5-1</id>
        <name>1</name>
        <sequence type="displayed"/>
    </isoform>
    <isoform>
        <id>Q8NCQ5-2</id>
        <name>2</name>
        <sequence type="described" ref="VSP_043033"/>
    </isoform>
</comment>
<accession>Q8NCQ5</accession>
<accession>B3KST3</accession>
<evidence type="ECO:0000250" key="1"/>
<evidence type="ECO:0000255" key="2">
    <source>
        <dbReference type="PROSITE-ProRule" id="PRU00080"/>
    </source>
</evidence>
<evidence type="ECO:0000303" key="3">
    <source>
    </source>
</evidence>